<protein>
    <recommendedName>
        <fullName evidence="1">Translation initiation factor IF-1</fullName>
    </recommendedName>
</protein>
<organism>
    <name type="scientific">Mycolicibacterium vanbaalenii (strain DSM 7251 / JCM 13017 / BCRC 16820 / KCTC 9966 / NRRL B-24157 / PYR-1)</name>
    <name type="common">Mycobacterium vanbaalenii</name>
    <dbReference type="NCBI Taxonomy" id="350058"/>
    <lineage>
        <taxon>Bacteria</taxon>
        <taxon>Bacillati</taxon>
        <taxon>Actinomycetota</taxon>
        <taxon>Actinomycetes</taxon>
        <taxon>Mycobacteriales</taxon>
        <taxon>Mycobacteriaceae</taxon>
        <taxon>Mycolicibacterium</taxon>
    </lineage>
</organism>
<name>IF1_MYCVP</name>
<accession>A1T515</accession>
<sequence>MAKKDGAIEVEGRVVEPLPNAMFRIELENGHKVLAHISGKMRQHYIRILPEDRVVVELSPYDLSRGRIVYRYK</sequence>
<dbReference type="EMBL" id="CP000511">
    <property type="protein sequence ID" value="ABM12265.1"/>
    <property type="molecule type" value="Genomic_DNA"/>
</dbReference>
<dbReference type="RefSeq" id="WP_003418601.1">
    <property type="nucleotide sequence ID" value="NZ_JACKSD010000066.1"/>
</dbReference>
<dbReference type="SMR" id="A1T515"/>
<dbReference type="STRING" id="350058.Mvan_1431"/>
<dbReference type="GeneID" id="98799387"/>
<dbReference type="KEGG" id="mva:Mvan_1431"/>
<dbReference type="eggNOG" id="COG0361">
    <property type="taxonomic scope" value="Bacteria"/>
</dbReference>
<dbReference type="HOGENOM" id="CLU_151267_1_0_11"/>
<dbReference type="Proteomes" id="UP000009159">
    <property type="component" value="Chromosome"/>
</dbReference>
<dbReference type="GO" id="GO:0005829">
    <property type="term" value="C:cytosol"/>
    <property type="evidence" value="ECO:0007669"/>
    <property type="project" value="TreeGrafter"/>
</dbReference>
<dbReference type="GO" id="GO:0043022">
    <property type="term" value="F:ribosome binding"/>
    <property type="evidence" value="ECO:0007669"/>
    <property type="project" value="UniProtKB-UniRule"/>
</dbReference>
<dbReference type="GO" id="GO:0019843">
    <property type="term" value="F:rRNA binding"/>
    <property type="evidence" value="ECO:0007669"/>
    <property type="project" value="UniProtKB-UniRule"/>
</dbReference>
<dbReference type="GO" id="GO:0003743">
    <property type="term" value="F:translation initiation factor activity"/>
    <property type="evidence" value="ECO:0007669"/>
    <property type="project" value="UniProtKB-UniRule"/>
</dbReference>
<dbReference type="CDD" id="cd04451">
    <property type="entry name" value="S1_IF1"/>
    <property type="match status" value="1"/>
</dbReference>
<dbReference type="FunFam" id="2.40.50.140:FF:000002">
    <property type="entry name" value="Translation initiation factor IF-1"/>
    <property type="match status" value="1"/>
</dbReference>
<dbReference type="Gene3D" id="2.40.50.140">
    <property type="entry name" value="Nucleic acid-binding proteins"/>
    <property type="match status" value="1"/>
</dbReference>
<dbReference type="HAMAP" id="MF_00075">
    <property type="entry name" value="IF_1"/>
    <property type="match status" value="1"/>
</dbReference>
<dbReference type="InterPro" id="IPR012340">
    <property type="entry name" value="NA-bd_OB-fold"/>
</dbReference>
<dbReference type="InterPro" id="IPR006196">
    <property type="entry name" value="RNA-binding_domain_S1_IF1"/>
</dbReference>
<dbReference type="InterPro" id="IPR004368">
    <property type="entry name" value="TIF_IF1"/>
</dbReference>
<dbReference type="NCBIfam" id="TIGR00008">
    <property type="entry name" value="infA"/>
    <property type="match status" value="1"/>
</dbReference>
<dbReference type="PANTHER" id="PTHR33370">
    <property type="entry name" value="TRANSLATION INITIATION FACTOR IF-1, CHLOROPLASTIC"/>
    <property type="match status" value="1"/>
</dbReference>
<dbReference type="PANTHER" id="PTHR33370:SF1">
    <property type="entry name" value="TRANSLATION INITIATION FACTOR IF-1, CHLOROPLASTIC"/>
    <property type="match status" value="1"/>
</dbReference>
<dbReference type="Pfam" id="PF01176">
    <property type="entry name" value="eIF-1a"/>
    <property type="match status" value="1"/>
</dbReference>
<dbReference type="SUPFAM" id="SSF50249">
    <property type="entry name" value="Nucleic acid-binding proteins"/>
    <property type="match status" value="1"/>
</dbReference>
<dbReference type="PROSITE" id="PS50832">
    <property type="entry name" value="S1_IF1_TYPE"/>
    <property type="match status" value="1"/>
</dbReference>
<gene>
    <name evidence="1" type="primary">infA</name>
    <name type="ordered locus">Mvan_1431</name>
</gene>
<keyword id="KW-0963">Cytoplasm</keyword>
<keyword id="KW-0396">Initiation factor</keyword>
<keyword id="KW-0648">Protein biosynthesis</keyword>
<keyword id="KW-0694">RNA-binding</keyword>
<keyword id="KW-0699">rRNA-binding</keyword>
<evidence type="ECO:0000255" key="1">
    <source>
        <dbReference type="HAMAP-Rule" id="MF_00075"/>
    </source>
</evidence>
<comment type="function">
    <text evidence="1">One of the essential components for the initiation of protein synthesis. Stabilizes the binding of IF-2 and IF-3 on the 30S subunit to which N-formylmethionyl-tRNA(fMet) subsequently binds. Helps modulate mRNA selection, yielding the 30S pre-initiation complex (PIC). Upon addition of the 50S ribosomal subunit IF-1, IF-2 and IF-3 are released leaving the mature 70S translation initiation complex.</text>
</comment>
<comment type="subunit">
    <text evidence="1">Component of the 30S ribosomal translation pre-initiation complex which assembles on the 30S ribosome in the order IF-2 and IF-3, IF-1 and N-formylmethionyl-tRNA(fMet); mRNA recruitment can occur at any time during PIC assembly.</text>
</comment>
<comment type="subcellular location">
    <subcellularLocation>
        <location evidence="1">Cytoplasm</location>
    </subcellularLocation>
</comment>
<comment type="similarity">
    <text evidence="1">Belongs to the IF-1 family.</text>
</comment>
<proteinExistence type="inferred from homology"/>
<feature type="chain" id="PRO_0000338867" description="Translation initiation factor IF-1">
    <location>
        <begin position="1"/>
        <end position="73"/>
    </location>
</feature>
<feature type="domain" description="S1-like" evidence="1">
    <location>
        <begin position="1"/>
        <end position="73"/>
    </location>
</feature>
<reference key="1">
    <citation type="submission" date="2006-12" db="EMBL/GenBank/DDBJ databases">
        <title>Complete sequence of Mycobacterium vanbaalenii PYR-1.</title>
        <authorList>
            <consortium name="US DOE Joint Genome Institute"/>
            <person name="Copeland A."/>
            <person name="Lucas S."/>
            <person name="Lapidus A."/>
            <person name="Barry K."/>
            <person name="Detter J.C."/>
            <person name="Glavina del Rio T."/>
            <person name="Hammon N."/>
            <person name="Israni S."/>
            <person name="Dalin E."/>
            <person name="Tice H."/>
            <person name="Pitluck S."/>
            <person name="Singan V."/>
            <person name="Schmutz J."/>
            <person name="Larimer F."/>
            <person name="Land M."/>
            <person name="Hauser L."/>
            <person name="Kyrpides N."/>
            <person name="Anderson I.J."/>
            <person name="Miller C."/>
            <person name="Richardson P."/>
        </authorList>
    </citation>
    <scope>NUCLEOTIDE SEQUENCE [LARGE SCALE GENOMIC DNA]</scope>
    <source>
        <strain>DSM 7251 / JCM 13017 / BCRC 16820 / KCTC 9966 / NRRL B-24157 / PYR-1</strain>
    </source>
</reference>